<feature type="chain" id="PRO_0000235614" description="5'-nucleotidase SurE">
    <location>
        <begin position="1"/>
        <end position="252"/>
    </location>
</feature>
<feature type="binding site" evidence="1">
    <location>
        <position position="8"/>
    </location>
    <ligand>
        <name>a divalent metal cation</name>
        <dbReference type="ChEBI" id="CHEBI:60240"/>
    </ligand>
</feature>
<feature type="binding site" evidence="1">
    <location>
        <position position="9"/>
    </location>
    <ligand>
        <name>a divalent metal cation</name>
        <dbReference type="ChEBI" id="CHEBI:60240"/>
    </ligand>
</feature>
<feature type="binding site" evidence="1">
    <location>
        <position position="42"/>
    </location>
    <ligand>
        <name>a divalent metal cation</name>
        <dbReference type="ChEBI" id="CHEBI:60240"/>
    </ligand>
</feature>
<feature type="binding site" evidence="1">
    <location>
        <position position="94"/>
    </location>
    <ligand>
        <name>a divalent metal cation</name>
        <dbReference type="ChEBI" id="CHEBI:60240"/>
    </ligand>
</feature>
<keyword id="KW-0963">Cytoplasm</keyword>
<keyword id="KW-0378">Hydrolase</keyword>
<keyword id="KW-0479">Metal-binding</keyword>
<keyword id="KW-0547">Nucleotide-binding</keyword>
<evidence type="ECO:0000255" key="1">
    <source>
        <dbReference type="HAMAP-Rule" id="MF_00060"/>
    </source>
</evidence>
<evidence type="ECO:0000305" key="2"/>
<proteinExistence type="inferred from homology"/>
<gene>
    <name evidence="1" type="primary">surE</name>
    <name type="ordered locus">ERGA_CDS_03050</name>
</gene>
<name>SURE_EHRRG</name>
<organism>
    <name type="scientific">Ehrlichia ruminantium (strain Gardel)</name>
    <dbReference type="NCBI Taxonomy" id="302409"/>
    <lineage>
        <taxon>Bacteria</taxon>
        <taxon>Pseudomonadati</taxon>
        <taxon>Pseudomonadota</taxon>
        <taxon>Alphaproteobacteria</taxon>
        <taxon>Rickettsiales</taxon>
        <taxon>Anaplasmataceae</taxon>
        <taxon>Ehrlichia</taxon>
    </lineage>
</organism>
<sequence length="252" mass="27612">MRVLLSNDDGFHANGIKALKEIVIKSGIASEIWVVAPLNNCSGSGRSVGLNVKVQVSKVSDTEFIVDSTPSTSVFLALRKIMNYKPDLILSGINHGVNIGNDVWYSGTVAAAAEGAAINIPSIAISQEYDNKSGEINWVNPQRFLKQIIEMLVNVSFWNKSTVMNVNFPLMPAKGIKFTDQGKYVPCNEIEKNESSDDSNVSYTITRITPNKKNRAQCDGSIKAIDEGYITITPLKFDMTDFDVLTSLNSLK</sequence>
<protein>
    <recommendedName>
        <fullName evidence="1">5'-nucleotidase SurE</fullName>
        <ecNumber evidence="1">3.1.3.5</ecNumber>
    </recommendedName>
    <alternativeName>
        <fullName evidence="1">Nucleoside 5'-monophosphate phosphohydrolase</fullName>
    </alternativeName>
</protein>
<dbReference type="EC" id="3.1.3.5" evidence="1"/>
<dbReference type="EMBL" id="CR925677">
    <property type="protein sequence ID" value="CAI27757.1"/>
    <property type="status" value="ALT_INIT"/>
    <property type="molecule type" value="Genomic_DNA"/>
</dbReference>
<dbReference type="RefSeq" id="WP_044156958.1">
    <property type="nucleotide sequence ID" value="NC_006831.1"/>
</dbReference>
<dbReference type="SMR" id="Q5FHG1"/>
<dbReference type="KEGG" id="erg:ERGA_CDS_03050"/>
<dbReference type="HOGENOM" id="CLU_045192_1_2_5"/>
<dbReference type="Proteomes" id="UP000000533">
    <property type="component" value="Chromosome"/>
</dbReference>
<dbReference type="GO" id="GO:0005737">
    <property type="term" value="C:cytoplasm"/>
    <property type="evidence" value="ECO:0007669"/>
    <property type="project" value="UniProtKB-SubCell"/>
</dbReference>
<dbReference type="GO" id="GO:0008254">
    <property type="term" value="F:3'-nucleotidase activity"/>
    <property type="evidence" value="ECO:0007669"/>
    <property type="project" value="TreeGrafter"/>
</dbReference>
<dbReference type="GO" id="GO:0008253">
    <property type="term" value="F:5'-nucleotidase activity"/>
    <property type="evidence" value="ECO:0007669"/>
    <property type="project" value="UniProtKB-UniRule"/>
</dbReference>
<dbReference type="GO" id="GO:0004309">
    <property type="term" value="F:exopolyphosphatase activity"/>
    <property type="evidence" value="ECO:0007669"/>
    <property type="project" value="TreeGrafter"/>
</dbReference>
<dbReference type="GO" id="GO:0046872">
    <property type="term" value="F:metal ion binding"/>
    <property type="evidence" value="ECO:0007669"/>
    <property type="project" value="UniProtKB-UniRule"/>
</dbReference>
<dbReference type="GO" id="GO:0000166">
    <property type="term" value="F:nucleotide binding"/>
    <property type="evidence" value="ECO:0007669"/>
    <property type="project" value="UniProtKB-KW"/>
</dbReference>
<dbReference type="Gene3D" id="3.40.1210.10">
    <property type="entry name" value="Survival protein SurE-like phosphatase/nucleotidase"/>
    <property type="match status" value="1"/>
</dbReference>
<dbReference type="HAMAP" id="MF_00060">
    <property type="entry name" value="SurE"/>
    <property type="match status" value="1"/>
</dbReference>
<dbReference type="InterPro" id="IPR030048">
    <property type="entry name" value="SurE"/>
</dbReference>
<dbReference type="InterPro" id="IPR002828">
    <property type="entry name" value="SurE-like_Pase/nucleotidase"/>
</dbReference>
<dbReference type="InterPro" id="IPR036523">
    <property type="entry name" value="SurE-like_sf"/>
</dbReference>
<dbReference type="NCBIfam" id="TIGR00087">
    <property type="entry name" value="surE"/>
    <property type="match status" value="1"/>
</dbReference>
<dbReference type="PANTHER" id="PTHR30457">
    <property type="entry name" value="5'-NUCLEOTIDASE SURE"/>
    <property type="match status" value="1"/>
</dbReference>
<dbReference type="PANTHER" id="PTHR30457:SF12">
    <property type="entry name" value="5'_3'-NUCLEOTIDASE SURE"/>
    <property type="match status" value="1"/>
</dbReference>
<dbReference type="Pfam" id="PF01975">
    <property type="entry name" value="SurE"/>
    <property type="match status" value="1"/>
</dbReference>
<dbReference type="SUPFAM" id="SSF64167">
    <property type="entry name" value="SurE-like"/>
    <property type="match status" value="1"/>
</dbReference>
<comment type="function">
    <text evidence="1">Nucleotidase that shows phosphatase activity on nucleoside 5'-monophosphates.</text>
</comment>
<comment type="catalytic activity">
    <reaction evidence="1">
        <text>a ribonucleoside 5'-phosphate + H2O = a ribonucleoside + phosphate</text>
        <dbReference type="Rhea" id="RHEA:12484"/>
        <dbReference type="ChEBI" id="CHEBI:15377"/>
        <dbReference type="ChEBI" id="CHEBI:18254"/>
        <dbReference type="ChEBI" id="CHEBI:43474"/>
        <dbReference type="ChEBI" id="CHEBI:58043"/>
        <dbReference type="EC" id="3.1.3.5"/>
    </reaction>
</comment>
<comment type="cofactor">
    <cofactor evidence="1">
        <name>a divalent metal cation</name>
        <dbReference type="ChEBI" id="CHEBI:60240"/>
    </cofactor>
    <text evidence="1">Binds 1 divalent metal cation per subunit.</text>
</comment>
<comment type="subcellular location">
    <subcellularLocation>
        <location evidence="1">Cytoplasm</location>
    </subcellularLocation>
</comment>
<comment type="similarity">
    <text evidence="1">Belongs to the SurE nucleotidase family.</text>
</comment>
<comment type="sequence caution" evidence="2">
    <conflict type="erroneous initiation">
        <sequence resource="EMBL-CDS" id="CAI27757"/>
    </conflict>
</comment>
<reference key="1">
    <citation type="journal article" date="2006" name="J. Bacteriol.">
        <title>Comparative genomic analysis of three strains of Ehrlichia ruminantium reveals an active process of genome size plasticity.</title>
        <authorList>
            <person name="Frutos R."/>
            <person name="Viari A."/>
            <person name="Ferraz C."/>
            <person name="Morgat A."/>
            <person name="Eychenie S."/>
            <person name="Kandassamy Y."/>
            <person name="Chantal I."/>
            <person name="Bensaid A."/>
            <person name="Coissac E."/>
            <person name="Vachiery N."/>
            <person name="Demaille J."/>
            <person name="Martinez D."/>
        </authorList>
    </citation>
    <scope>NUCLEOTIDE SEQUENCE [LARGE SCALE GENOMIC DNA]</scope>
    <source>
        <strain>Gardel</strain>
    </source>
</reference>
<accession>Q5FHG1</accession>